<feature type="chain" id="PRO_0000316692" description="Putative pyruvate, phosphate dikinase regulatory protein">
    <location>
        <begin position="1"/>
        <end position="270"/>
    </location>
</feature>
<feature type="binding site" evidence="1">
    <location>
        <begin position="151"/>
        <end position="158"/>
    </location>
    <ligand>
        <name>ADP</name>
        <dbReference type="ChEBI" id="CHEBI:456216"/>
    </ligand>
</feature>
<comment type="function">
    <text evidence="1">Bifunctional serine/threonine kinase and phosphorylase involved in the regulation of the pyruvate, phosphate dikinase (PPDK) by catalyzing its phosphorylation/dephosphorylation.</text>
</comment>
<comment type="catalytic activity">
    <reaction evidence="1">
        <text>N(tele)-phospho-L-histidyl/L-threonyl-[pyruvate, phosphate dikinase] + ADP = N(tele)-phospho-L-histidyl/O-phospho-L-threonyl-[pyruvate, phosphate dikinase] + AMP + H(+)</text>
        <dbReference type="Rhea" id="RHEA:43692"/>
        <dbReference type="Rhea" id="RHEA-COMP:10650"/>
        <dbReference type="Rhea" id="RHEA-COMP:10651"/>
        <dbReference type="ChEBI" id="CHEBI:15378"/>
        <dbReference type="ChEBI" id="CHEBI:30013"/>
        <dbReference type="ChEBI" id="CHEBI:61977"/>
        <dbReference type="ChEBI" id="CHEBI:83586"/>
        <dbReference type="ChEBI" id="CHEBI:456215"/>
        <dbReference type="ChEBI" id="CHEBI:456216"/>
        <dbReference type="EC" id="2.7.11.32"/>
    </reaction>
</comment>
<comment type="catalytic activity">
    <reaction evidence="1">
        <text>N(tele)-phospho-L-histidyl/O-phospho-L-threonyl-[pyruvate, phosphate dikinase] + phosphate + H(+) = N(tele)-phospho-L-histidyl/L-threonyl-[pyruvate, phosphate dikinase] + diphosphate</text>
        <dbReference type="Rhea" id="RHEA:43696"/>
        <dbReference type="Rhea" id="RHEA-COMP:10650"/>
        <dbReference type="Rhea" id="RHEA-COMP:10651"/>
        <dbReference type="ChEBI" id="CHEBI:15378"/>
        <dbReference type="ChEBI" id="CHEBI:30013"/>
        <dbReference type="ChEBI" id="CHEBI:33019"/>
        <dbReference type="ChEBI" id="CHEBI:43474"/>
        <dbReference type="ChEBI" id="CHEBI:61977"/>
        <dbReference type="ChEBI" id="CHEBI:83586"/>
        <dbReference type="EC" id="2.7.4.27"/>
    </reaction>
</comment>
<comment type="similarity">
    <text evidence="1">Belongs to the pyruvate, phosphate/water dikinase regulatory protein family. PDRP subfamily.</text>
</comment>
<organism>
    <name type="scientific">Ligilactobacillus salivarius (strain UCC118)</name>
    <name type="common">Lactobacillus salivarius</name>
    <dbReference type="NCBI Taxonomy" id="362948"/>
    <lineage>
        <taxon>Bacteria</taxon>
        <taxon>Bacillati</taxon>
        <taxon>Bacillota</taxon>
        <taxon>Bacilli</taxon>
        <taxon>Lactobacillales</taxon>
        <taxon>Lactobacillaceae</taxon>
        <taxon>Ligilactobacillus</taxon>
    </lineage>
</organism>
<name>PDRP_LIGS1</name>
<keyword id="KW-0418">Kinase</keyword>
<keyword id="KW-0547">Nucleotide-binding</keyword>
<keyword id="KW-1185">Reference proteome</keyword>
<keyword id="KW-0723">Serine/threonine-protein kinase</keyword>
<keyword id="KW-0808">Transferase</keyword>
<gene>
    <name type="ordered locus">LSL_0699</name>
</gene>
<accession>Q1WU26</accession>
<protein>
    <recommendedName>
        <fullName evidence="1">Putative pyruvate, phosphate dikinase regulatory protein</fullName>
        <shortName evidence="1">PPDK regulatory protein</shortName>
        <ecNumber evidence="1">2.7.11.32</ecNumber>
        <ecNumber evidence="1">2.7.4.27</ecNumber>
    </recommendedName>
</protein>
<evidence type="ECO:0000255" key="1">
    <source>
        <dbReference type="HAMAP-Rule" id="MF_00921"/>
    </source>
</evidence>
<proteinExistence type="inferred from homology"/>
<sequence>MSDSITNIFVISDSVGETGLSLITAGTVQFPNSKFNIRRFPLTKTISLLQGILNKAKRENAIILHTFVNPELSDYVNNFGKENNLHVIDALTGVVQTLAEITGEKPLNAAGLKHKLNPDYFKRIEALEFAVTYDDGKDPSGFLKADIVLLGVSRTSKTPLSLYLANQGYKVANLPLVPKTQIPKEIYQVDKKRIFGLTNDPEVLNNIRRQRMISYGLDPDTVYSNMDNINQELEFATNLYKELGCLQINVATKSIEETATLIIESLDSED</sequence>
<reference key="1">
    <citation type="journal article" date="2006" name="Proc. Natl. Acad. Sci. U.S.A.">
        <title>Multireplicon genome architecture of Lactobacillus salivarius.</title>
        <authorList>
            <person name="Claesson M.J."/>
            <person name="Li Y."/>
            <person name="Leahy S."/>
            <person name="Canchaya C."/>
            <person name="van Pijkeren J.P."/>
            <person name="Cerdeno-Tarraga A.M."/>
            <person name="Parkhill J."/>
            <person name="Flynn S."/>
            <person name="O'Sullivan G.C."/>
            <person name="Collins J.K."/>
            <person name="Higgins D."/>
            <person name="Shanahan F."/>
            <person name="Fitzgerald G.F."/>
            <person name="van Sinderen D."/>
            <person name="O'Toole P.W."/>
        </authorList>
    </citation>
    <scope>NUCLEOTIDE SEQUENCE [LARGE SCALE GENOMIC DNA]</scope>
    <source>
        <strain>UCC118</strain>
    </source>
</reference>
<dbReference type="EC" id="2.7.11.32" evidence="1"/>
<dbReference type="EC" id="2.7.4.27" evidence="1"/>
<dbReference type="EMBL" id="CP000233">
    <property type="protein sequence ID" value="ABD99509.1"/>
    <property type="molecule type" value="Genomic_DNA"/>
</dbReference>
<dbReference type="RefSeq" id="WP_003703800.1">
    <property type="nucleotide sequence ID" value="NC_007929.1"/>
</dbReference>
<dbReference type="RefSeq" id="YP_535592.1">
    <property type="nucleotide sequence ID" value="NC_007929.1"/>
</dbReference>
<dbReference type="SMR" id="Q1WU26"/>
<dbReference type="STRING" id="362948.LSL_0699"/>
<dbReference type="KEGG" id="lsl:LSL_0699"/>
<dbReference type="PATRIC" id="fig|362948.14.peg.778"/>
<dbReference type="HOGENOM" id="CLU_046206_2_1_9"/>
<dbReference type="OrthoDB" id="9782201at2"/>
<dbReference type="Proteomes" id="UP000006559">
    <property type="component" value="Chromosome"/>
</dbReference>
<dbReference type="GO" id="GO:0043531">
    <property type="term" value="F:ADP binding"/>
    <property type="evidence" value="ECO:0007669"/>
    <property type="project" value="UniProtKB-UniRule"/>
</dbReference>
<dbReference type="GO" id="GO:0005524">
    <property type="term" value="F:ATP binding"/>
    <property type="evidence" value="ECO:0007669"/>
    <property type="project" value="InterPro"/>
</dbReference>
<dbReference type="GO" id="GO:0016776">
    <property type="term" value="F:phosphotransferase activity, phosphate group as acceptor"/>
    <property type="evidence" value="ECO:0007669"/>
    <property type="project" value="UniProtKB-UniRule"/>
</dbReference>
<dbReference type="GO" id="GO:0004674">
    <property type="term" value="F:protein serine/threonine kinase activity"/>
    <property type="evidence" value="ECO:0007669"/>
    <property type="project" value="UniProtKB-UniRule"/>
</dbReference>
<dbReference type="HAMAP" id="MF_00921">
    <property type="entry name" value="PDRP"/>
    <property type="match status" value="1"/>
</dbReference>
<dbReference type="InterPro" id="IPR005177">
    <property type="entry name" value="Kinase-pyrophosphorylase"/>
</dbReference>
<dbReference type="InterPro" id="IPR026565">
    <property type="entry name" value="PPDK_reg"/>
</dbReference>
<dbReference type="NCBIfam" id="NF003742">
    <property type="entry name" value="PRK05339.1"/>
    <property type="match status" value="1"/>
</dbReference>
<dbReference type="PANTHER" id="PTHR31756">
    <property type="entry name" value="PYRUVATE, PHOSPHATE DIKINASE REGULATORY PROTEIN 1, CHLOROPLASTIC"/>
    <property type="match status" value="1"/>
</dbReference>
<dbReference type="PANTHER" id="PTHR31756:SF3">
    <property type="entry name" value="PYRUVATE, PHOSPHATE DIKINASE REGULATORY PROTEIN 1, CHLOROPLASTIC"/>
    <property type="match status" value="1"/>
</dbReference>
<dbReference type="Pfam" id="PF03618">
    <property type="entry name" value="Kinase-PPPase"/>
    <property type="match status" value="1"/>
</dbReference>